<proteinExistence type="inferred from homology"/>
<protein>
    <recommendedName>
        <fullName evidence="1">Peptide chain release factor 3</fullName>
        <shortName evidence="1">RF-3</shortName>
    </recommendedName>
</protein>
<feature type="chain" id="PRO_1000202466" description="Peptide chain release factor 3">
    <location>
        <begin position="1"/>
        <end position="529"/>
    </location>
</feature>
<feature type="domain" description="tr-type G">
    <location>
        <begin position="11"/>
        <end position="280"/>
    </location>
</feature>
<feature type="binding site" evidence="1">
    <location>
        <begin position="20"/>
        <end position="27"/>
    </location>
    <ligand>
        <name>GTP</name>
        <dbReference type="ChEBI" id="CHEBI:37565"/>
    </ligand>
</feature>
<feature type="binding site" evidence="1">
    <location>
        <begin position="88"/>
        <end position="92"/>
    </location>
    <ligand>
        <name>GTP</name>
        <dbReference type="ChEBI" id="CHEBI:37565"/>
    </ligand>
</feature>
<feature type="binding site" evidence="1">
    <location>
        <begin position="142"/>
        <end position="145"/>
    </location>
    <ligand>
        <name>GTP</name>
        <dbReference type="ChEBI" id="CHEBI:37565"/>
    </ligand>
</feature>
<organism>
    <name type="scientific">Escherichia coli (strain K12 / MC4100 / BW2952)</name>
    <dbReference type="NCBI Taxonomy" id="595496"/>
    <lineage>
        <taxon>Bacteria</taxon>
        <taxon>Pseudomonadati</taxon>
        <taxon>Pseudomonadota</taxon>
        <taxon>Gammaproteobacteria</taxon>
        <taxon>Enterobacterales</taxon>
        <taxon>Enterobacteriaceae</taxon>
        <taxon>Escherichia</taxon>
    </lineage>
</organism>
<dbReference type="EMBL" id="CP001396">
    <property type="protein sequence ID" value="ACR63984.1"/>
    <property type="molecule type" value="Genomic_DNA"/>
</dbReference>
<dbReference type="RefSeq" id="WP_000175940.1">
    <property type="nucleotide sequence ID" value="NC_012759.1"/>
</dbReference>
<dbReference type="SMR" id="C4ZT56"/>
<dbReference type="KEGG" id="ebw:BWG_4066"/>
<dbReference type="HOGENOM" id="CLU_002794_2_1_6"/>
<dbReference type="GO" id="GO:0005829">
    <property type="term" value="C:cytosol"/>
    <property type="evidence" value="ECO:0007669"/>
    <property type="project" value="TreeGrafter"/>
</dbReference>
<dbReference type="GO" id="GO:0005525">
    <property type="term" value="F:GTP binding"/>
    <property type="evidence" value="ECO:0007669"/>
    <property type="project" value="UniProtKB-UniRule"/>
</dbReference>
<dbReference type="GO" id="GO:0003924">
    <property type="term" value="F:GTPase activity"/>
    <property type="evidence" value="ECO:0007669"/>
    <property type="project" value="InterPro"/>
</dbReference>
<dbReference type="GO" id="GO:0097216">
    <property type="term" value="F:guanosine tetraphosphate binding"/>
    <property type="evidence" value="ECO:0007669"/>
    <property type="project" value="UniProtKB-ARBA"/>
</dbReference>
<dbReference type="GO" id="GO:0016150">
    <property type="term" value="F:translation release factor activity, codon nonspecific"/>
    <property type="evidence" value="ECO:0007669"/>
    <property type="project" value="TreeGrafter"/>
</dbReference>
<dbReference type="GO" id="GO:0016149">
    <property type="term" value="F:translation release factor activity, codon specific"/>
    <property type="evidence" value="ECO:0007669"/>
    <property type="project" value="UniProtKB-UniRule"/>
</dbReference>
<dbReference type="GO" id="GO:0006449">
    <property type="term" value="P:regulation of translational termination"/>
    <property type="evidence" value="ECO:0007669"/>
    <property type="project" value="UniProtKB-UniRule"/>
</dbReference>
<dbReference type="CDD" id="cd04169">
    <property type="entry name" value="RF3"/>
    <property type="match status" value="1"/>
</dbReference>
<dbReference type="CDD" id="cd03689">
    <property type="entry name" value="RF3_II"/>
    <property type="match status" value="1"/>
</dbReference>
<dbReference type="CDD" id="cd16259">
    <property type="entry name" value="RF3_III"/>
    <property type="match status" value="1"/>
</dbReference>
<dbReference type="FunFam" id="2.40.30.10:FF:000040">
    <property type="entry name" value="Peptide chain release factor 3"/>
    <property type="match status" value="1"/>
</dbReference>
<dbReference type="FunFam" id="3.30.70.3280:FF:000001">
    <property type="entry name" value="Peptide chain release factor 3"/>
    <property type="match status" value="1"/>
</dbReference>
<dbReference type="FunFam" id="3.40.50.300:FF:000184">
    <property type="entry name" value="Peptide chain release factor 3"/>
    <property type="match status" value="1"/>
</dbReference>
<dbReference type="FunFam" id="3.40.50.300:FF:000253">
    <property type="entry name" value="Peptide chain release factor 3"/>
    <property type="match status" value="1"/>
</dbReference>
<dbReference type="Gene3D" id="3.40.50.300">
    <property type="entry name" value="P-loop containing nucleotide triphosphate hydrolases"/>
    <property type="match status" value="3"/>
</dbReference>
<dbReference type="Gene3D" id="3.30.70.3280">
    <property type="entry name" value="Peptide chain release factor 3, domain III"/>
    <property type="match status" value="1"/>
</dbReference>
<dbReference type="HAMAP" id="MF_00072">
    <property type="entry name" value="Rel_fac_3"/>
    <property type="match status" value="1"/>
</dbReference>
<dbReference type="InterPro" id="IPR053905">
    <property type="entry name" value="EF-G-like_DII"/>
</dbReference>
<dbReference type="InterPro" id="IPR035647">
    <property type="entry name" value="EFG_III/V"/>
</dbReference>
<dbReference type="InterPro" id="IPR031157">
    <property type="entry name" value="G_TR_CS"/>
</dbReference>
<dbReference type="InterPro" id="IPR027417">
    <property type="entry name" value="P-loop_NTPase"/>
</dbReference>
<dbReference type="InterPro" id="IPR004548">
    <property type="entry name" value="PrfC"/>
</dbReference>
<dbReference type="InterPro" id="IPR032090">
    <property type="entry name" value="RF3_C"/>
</dbReference>
<dbReference type="InterPro" id="IPR038467">
    <property type="entry name" value="RF3_dom_3_sf"/>
</dbReference>
<dbReference type="InterPro" id="IPR041732">
    <property type="entry name" value="RF3_GTP-bd"/>
</dbReference>
<dbReference type="InterPro" id="IPR005225">
    <property type="entry name" value="Small_GTP-bd"/>
</dbReference>
<dbReference type="InterPro" id="IPR000795">
    <property type="entry name" value="T_Tr_GTP-bd_dom"/>
</dbReference>
<dbReference type="InterPro" id="IPR009000">
    <property type="entry name" value="Transl_B-barrel_sf"/>
</dbReference>
<dbReference type="NCBIfam" id="TIGR00503">
    <property type="entry name" value="prfC"/>
    <property type="match status" value="1"/>
</dbReference>
<dbReference type="NCBIfam" id="NF001964">
    <property type="entry name" value="PRK00741.1"/>
    <property type="match status" value="1"/>
</dbReference>
<dbReference type="NCBIfam" id="TIGR00231">
    <property type="entry name" value="small_GTP"/>
    <property type="match status" value="1"/>
</dbReference>
<dbReference type="PANTHER" id="PTHR43556">
    <property type="entry name" value="PEPTIDE CHAIN RELEASE FACTOR RF3"/>
    <property type="match status" value="1"/>
</dbReference>
<dbReference type="PANTHER" id="PTHR43556:SF2">
    <property type="entry name" value="PEPTIDE CHAIN RELEASE FACTOR RF3"/>
    <property type="match status" value="1"/>
</dbReference>
<dbReference type="Pfam" id="PF22042">
    <property type="entry name" value="EF-G_D2"/>
    <property type="match status" value="1"/>
</dbReference>
<dbReference type="Pfam" id="PF00009">
    <property type="entry name" value="GTP_EFTU"/>
    <property type="match status" value="1"/>
</dbReference>
<dbReference type="Pfam" id="PF16658">
    <property type="entry name" value="RF3_C"/>
    <property type="match status" value="1"/>
</dbReference>
<dbReference type="PRINTS" id="PR00315">
    <property type="entry name" value="ELONGATNFCT"/>
</dbReference>
<dbReference type="SUPFAM" id="SSF54980">
    <property type="entry name" value="EF-G C-terminal domain-like"/>
    <property type="match status" value="1"/>
</dbReference>
<dbReference type="SUPFAM" id="SSF52540">
    <property type="entry name" value="P-loop containing nucleoside triphosphate hydrolases"/>
    <property type="match status" value="1"/>
</dbReference>
<dbReference type="SUPFAM" id="SSF50447">
    <property type="entry name" value="Translation proteins"/>
    <property type="match status" value="1"/>
</dbReference>
<dbReference type="PROSITE" id="PS00301">
    <property type="entry name" value="G_TR_1"/>
    <property type="match status" value="1"/>
</dbReference>
<dbReference type="PROSITE" id="PS51722">
    <property type="entry name" value="G_TR_2"/>
    <property type="match status" value="1"/>
</dbReference>
<evidence type="ECO:0000255" key="1">
    <source>
        <dbReference type="HAMAP-Rule" id="MF_00072"/>
    </source>
</evidence>
<comment type="function">
    <text evidence="1">Increases the formation of ribosomal termination complexes and stimulates activities of RF-1 and RF-2. It binds guanine nucleotides and has strong preference for UGA stop codons. It may interact directly with the ribosome. The stimulation of RF-1 and RF-2 is significantly reduced by GTP and GDP, but not by GMP.</text>
</comment>
<comment type="subcellular location">
    <subcellularLocation>
        <location evidence="1">Cytoplasm</location>
    </subcellularLocation>
</comment>
<comment type="similarity">
    <text evidence="1">Belongs to the TRAFAC class translation factor GTPase superfamily. Classic translation factor GTPase family. PrfC subfamily.</text>
</comment>
<keyword id="KW-0963">Cytoplasm</keyword>
<keyword id="KW-0342">GTP-binding</keyword>
<keyword id="KW-0547">Nucleotide-binding</keyword>
<keyword id="KW-0648">Protein biosynthesis</keyword>
<name>RF3_ECOBW</name>
<reference key="1">
    <citation type="journal article" date="2009" name="J. Bacteriol.">
        <title>Genomic sequencing reveals regulatory mutations and recombinational events in the widely used MC4100 lineage of Escherichia coli K-12.</title>
        <authorList>
            <person name="Ferenci T."/>
            <person name="Zhou Z."/>
            <person name="Betteridge T."/>
            <person name="Ren Y."/>
            <person name="Liu Y."/>
            <person name="Feng L."/>
            <person name="Reeves P.R."/>
            <person name="Wang L."/>
        </authorList>
    </citation>
    <scope>NUCLEOTIDE SEQUENCE [LARGE SCALE GENOMIC DNA]</scope>
    <source>
        <strain>K12 / MC4100 / BW2952</strain>
    </source>
</reference>
<gene>
    <name evidence="1" type="primary">prfC</name>
    <name type="ordered locus">BWG_4066</name>
</gene>
<sequence length="529" mass="59574">MTLSPYLQEVAKRRTFAIISHPDAGKTTITEKVLLFGQAIQTAGTVKGRGSNQHAKSDWMEMEKQRGISITTSVMQFPYHDCLVNLLDTPGHEDFSEDTYRTLTAVDCCLMVIDAAKGVEDRTRKLMEVTRLRDTPILTFMNKLDRDIRDPMELLDEVENELKIGCAPITWPIGCGKLFKGVYHLYKDETYLYQSGKGHTIQEVRIVKGLNNPDLDAAVGEDLAQQLRDELELVKGASNEFDKELFLAGEITPVFFGTALGNFGVDHMLDGLVEWAPAPMPRQTDTRTVEASEDKFTGFVFKIQANMDPKHRDRVAFMRVVSGKYEKGMKLRQVRTAKDVVISDALTFMAGDRSHVEEAYPGDILGLHNHGTIQIGDTFTQGEMMKFTGIPNFAPELFRRIRLKDPLKQKQLLKGLVQLSEEGAVQVFRPISNNDLIVGAVGVLQFDVVVARLKSEYNVEAVYESVNVATARWVECADAKKFEEFKRKNESQLALDGGDNLAYIATSMVNLRLAQERYPDVQFHQTREH</sequence>
<accession>C4ZT56</accession>